<gene>
    <name evidence="1" type="primary">thyA</name>
    <name type="ordered locus">SpyM3_0601</name>
</gene>
<proteinExistence type="inferred from homology"/>
<comment type="function">
    <text evidence="1">Catalyzes the reductive methylation of 2'-deoxyuridine-5'-monophosphate (dUMP) to 2'-deoxythymidine-5'-monophosphate (dTMP) while utilizing 5,10-methylenetetrahydrofolate (mTHF) as the methyl donor and reductant in the reaction, yielding dihydrofolate (DHF) as a by-product. This enzymatic reaction provides an intracellular de novo source of dTMP, an essential precursor for DNA biosynthesis.</text>
</comment>
<comment type="catalytic activity">
    <reaction evidence="1">
        <text>dUMP + (6R)-5,10-methylene-5,6,7,8-tetrahydrofolate = 7,8-dihydrofolate + dTMP</text>
        <dbReference type="Rhea" id="RHEA:12104"/>
        <dbReference type="ChEBI" id="CHEBI:15636"/>
        <dbReference type="ChEBI" id="CHEBI:57451"/>
        <dbReference type="ChEBI" id="CHEBI:63528"/>
        <dbReference type="ChEBI" id="CHEBI:246422"/>
        <dbReference type="EC" id="2.1.1.45"/>
    </reaction>
</comment>
<comment type="pathway">
    <text evidence="1">Pyrimidine metabolism; dTTP biosynthesis.</text>
</comment>
<comment type="subunit">
    <text evidence="1">Homodimer.</text>
</comment>
<comment type="subcellular location">
    <subcellularLocation>
        <location evidence="1">Cytoplasm</location>
    </subcellularLocation>
</comment>
<comment type="similarity">
    <text evidence="1">Belongs to the thymidylate synthase family. Bacterial-type ThyA subfamily.</text>
</comment>
<comment type="sequence caution" evidence="2">
    <conflict type="erroneous initiation">
        <sequence resource="EMBL-CDS" id="AAM79208"/>
    </conflict>
</comment>
<name>TYSY_STRP3</name>
<feature type="chain" id="PRO_0000141033" description="Thymidylate synthase">
    <location>
        <begin position="1"/>
        <end position="279"/>
    </location>
</feature>
<feature type="active site" description="Nucleophile" evidence="1">
    <location>
        <position position="154"/>
    </location>
</feature>
<feature type="binding site" evidence="1">
    <location>
        <begin position="133"/>
        <end position="134"/>
    </location>
    <ligand>
        <name>dUMP</name>
        <dbReference type="ChEBI" id="CHEBI:246422"/>
        <note>ligand shared between dimeric partners</note>
    </ligand>
</feature>
<feature type="binding site" description="in other chain" evidence="1">
    <location>
        <begin position="178"/>
        <end position="181"/>
    </location>
    <ligand>
        <name>dUMP</name>
        <dbReference type="ChEBI" id="CHEBI:246422"/>
        <note>ligand shared between dimeric partners</note>
    </ligand>
</feature>
<feature type="binding site" evidence="1">
    <location>
        <position position="181"/>
    </location>
    <ligand>
        <name>(6R)-5,10-methylene-5,6,7,8-tetrahydrofolate</name>
        <dbReference type="ChEBI" id="CHEBI:15636"/>
    </ligand>
</feature>
<feature type="binding site" description="in other chain" evidence="1">
    <location>
        <position position="189"/>
    </location>
    <ligand>
        <name>dUMP</name>
        <dbReference type="ChEBI" id="CHEBI:246422"/>
        <note>ligand shared between dimeric partners</note>
    </ligand>
</feature>
<feature type="binding site" description="in other chain" evidence="1">
    <location>
        <begin position="219"/>
        <end position="221"/>
    </location>
    <ligand>
        <name>dUMP</name>
        <dbReference type="ChEBI" id="CHEBI:246422"/>
        <note>ligand shared between dimeric partners</note>
    </ligand>
</feature>
<feature type="binding site" evidence="1">
    <location>
        <position position="278"/>
    </location>
    <ligand>
        <name>(6R)-5,10-methylene-5,6,7,8-tetrahydrofolate</name>
        <dbReference type="ChEBI" id="CHEBI:15636"/>
    </ligand>
</feature>
<protein>
    <recommendedName>
        <fullName evidence="1">Thymidylate synthase</fullName>
        <shortName evidence="1">TS</shortName>
        <shortName evidence="1">TSase</shortName>
        <ecNumber evidence="1">2.1.1.45</ecNumber>
    </recommendedName>
</protein>
<organism>
    <name type="scientific">Streptococcus pyogenes serotype M3 (strain ATCC BAA-595 / MGAS315)</name>
    <dbReference type="NCBI Taxonomy" id="198466"/>
    <lineage>
        <taxon>Bacteria</taxon>
        <taxon>Bacillati</taxon>
        <taxon>Bacillota</taxon>
        <taxon>Bacilli</taxon>
        <taxon>Lactobacillales</taxon>
        <taxon>Streptococcaceae</taxon>
        <taxon>Streptococcus</taxon>
    </lineage>
</organism>
<accession>P0DG66</accession>
<accession>P67052</accession>
<accession>Q9A092</accession>
<dbReference type="EC" id="2.1.1.45" evidence="1"/>
<dbReference type="EMBL" id="AE014074">
    <property type="protein sequence ID" value="AAM79208.1"/>
    <property type="status" value="ALT_INIT"/>
    <property type="molecule type" value="Genomic_DNA"/>
</dbReference>
<dbReference type="RefSeq" id="WP_010922172.1">
    <property type="nucleotide sequence ID" value="NC_004070.1"/>
</dbReference>
<dbReference type="SMR" id="P0DG66"/>
<dbReference type="KEGG" id="spg:SpyM3_0601"/>
<dbReference type="HOGENOM" id="CLU_021669_0_0_9"/>
<dbReference type="UniPathway" id="UPA00575"/>
<dbReference type="Proteomes" id="UP000000564">
    <property type="component" value="Chromosome"/>
</dbReference>
<dbReference type="GO" id="GO:0005829">
    <property type="term" value="C:cytosol"/>
    <property type="evidence" value="ECO:0007669"/>
    <property type="project" value="TreeGrafter"/>
</dbReference>
<dbReference type="GO" id="GO:0004799">
    <property type="term" value="F:thymidylate synthase activity"/>
    <property type="evidence" value="ECO:0007669"/>
    <property type="project" value="UniProtKB-UniRule"/>
</dbReference>
<dbReference type="GO" id="GO:0006231">
    <property type="term" value="P:dTMP biosynthetic process"/>
    <property type="evidence" value="ECO:0007669"/>
    <property type="project" value="UniProtKB-UniRule"/>
</dbReference>
<dbReference type="GO" id="GO:0006235">
    <property type="term" value="P:dTTP biosynthetic process"/>
    <property type="evidence" value="ECO:0007669"/>
    <property type="project" value="UniProtKB-UniRule"/>
</dbReference>
<dbReference type="GO" id="GO:0032259">
    <property type="term" value="P:methylation"/>
    <property type="evidence" value="ECO:0007669"/>
    <property type="project" value="UniProtKB-KW"/>
</dbReference>
<dbReference type="CDD" id="cd00351">
    <property type="entry name" value="TS_Pyrimidine_HMase"/>
    <property type="match status" value="1"/>
</dbReference>
<dbReference type="Gene3D" id="3.30.572.10">
    <property type="entry name" value="Thymidylate synthase/dCMP hydroxymethylase domain"/>
    <property type="match status" value="1"/>
</dbReference>
<dbReference type="HAMAP" id="MF_00008">
    <property type="entry name" value="Thymidy_synth_bact"/>
    <property type="match status" value="1"/>
</dbReference>
<dbReference type="InterPro" id="IPR045097">
    <property type="entry name" value="Thymidate_synth/dCMP_Mease"/>
</dbReference>
<dbReference type="InterPro" id="IPR023451">
    <property type="entry name" value="Thymidate_synth/dCMP_Mease_dom"/>
</dbReference>
<dbReference type="InterPro" id="IPR036926">
    <property type="entry name" value="Thymidate_synth/dCMP_Mease_sf"/>
</dbReference>
<dbReference type="InterPro" id="IPR000398">
    <property type="entry name" value="Thymidylate_synthase"/>
</dbReference>
<dbReference type="InterPro" id="IPR020940">
    <property type="entry name" value="Thymidylate_synthase_AS"/>
</dbReference>
<dbReference type="NCBIfam" id="NF002495">
    <property type="entry name" value="PRK01827.1-1"/>
    <property type="match status" value="1"/>
</dbReference>
<dbReference type="PANTHER" id="PTHR11548">
    <property type="entry name" value="THYMIDYLATE SYNTHASE 1"/>
    <property type="match status" value="1"/>
</dbReference>
<dbReference type="PANTHER" id="PTHR11548:SF1">
    <property type="entry name" value="THYMIDYLATE SYNTHASE 1"/>
    <property type="match status" value="1"/>
</dbReference>
<dbReference type="Pfam" id="PF00303">
    <property type="entry name" value="Thymidylat_synt"/>
    <property type="match status" value="1"/>
</dbReference>
<dbReference type="PRINTS" id="PR00108">
    <property type="entry name" value="THYMDSNTHASE"/>
</dbReference>
<dbReference type="SUPFAM" id="SSF55831">
    <property type="entry name" value="Thymidylate synthase/dCMP hydroxymethylase"/>
    <property type="match status" value="1"/>
</dbReference>
<dbReference type="PROSITE" id="PS00091">
    <property type="entry name" value="THYMIDYLATE_SYNTHASE"/>
    <property type="match status" value="1"/>
</dbReference>
<sequence>MTKADQIFKANIQKIINEGSLSEQARPKYKDGRTAHSKYITGAFAEYDLAKGEFPITTLRPIPIKSAIKELFWIYQDQSNSLDVLEAKYNVHYWNEWEVDQTRTIGQRYGAVVKKHDIISKILKQLAENPWNRRNVISLWDYEAFEETKGLLPCAFQIMFDVRRVGEDLYLDASLTQRSNDILVAHHINAMQYVALQMMIAKHFGWKIGKFFYFVNNLHIYDNQFDQAQELLKRQPVASQPKLVLNVPDRTNFFDIKPDDFELQNYDPVKPQLHFDLAI</sequence>
<evidence type="ECO:0000255" key="1">
    <source>
        <dbReference type="HAMAP-Rule" id="MF_00008"/>
    </source>
</evidence>
<evidence type="ECO:0000305" key="2"/>
<reference key="1">
    <citation type="journal article" date="2002" name="Proc. Natl. Acad. Sci. U.S.A.">
        <title>Genome sequence of a serotype M3 strain of group A Streptococcus: phage-encoded toxins, the high-virulence phenotype, and clone emergence.</title>
        <authorList>
            <person name="Beres S.B."/>
            <person name="Sylva G.L."/>
            <person name="Barbian K.D."/>
            <person name="Lei B."/>
            <person name="Hoff J.S."/>
            <person name="Mammarella N.D."/>
            <person name="Liu M.-Y."/>
            <person name="Smoot J.C."/>
            <person name="Porcella S.F."/>
            <person name="Parkins L.D."/>
            <person name="Campbell D.S."/>
            <person name="Smith T.M."/>
            <person name="McCormick J.K."/>
            <person name="Leung D.Y.M."/>
            <person name="Schlievert P.M."/>
            <person name="Musser J.M."/>
        </authorList>
    </citation>
    <scope>NUCLEOTIDE SEQUENCE [LARGE SCALE GENOMIC DNA]</scope>
    <source>
        <strain>ATCC BAA-595 / MGAS315</strain>
    </source>
</reference>
<keyword id="KW-0963">Cytoplasm</keyword>
<keyword id="KW-0489">Methyltransferase</keyword>
<keyword id="KW-0545">Nucleotide biosynthesis</keyword>
<keyword id="KW-0808">Transferase</keyword>